<gene>
    <name evidence="1" type="primary">atpH</name>
    <name type="ordered locus">MGAS9429_Spy0632</name>
</gene>
<reference key="1">
    <citation type="journal article" date="2006" name="Proc. Natl. Acad. Sci. U.S.A.">
        <title>Molecular genetic anatomy of inter- and intraserotype variation in the human bacterial pathogen group A Streptococcus.</title>
        <authorList>
            <person name="Beres S.B."/>
            <person name="Richter E.W."/>
            <person name="Nagiec M.J."/>
            <person name="Sumby P."/>
            <person name="Porcella S.F."/>
            <person name="DeLeo F.R."/>
            <person name="Musser J.M."/>
        </authorList>
    </citation>
    <scope>NUCLEOTIDE SEQUENCE [LARGE SCALE GENOMIC DNA]</scope>
    <source>
        <strain>MGAS9429</strain>
    </source>
</reference>
<sequence length="178" mass="19887">MTKKEQALIEQYAKSLVEVASEHHSLDALQADVLAILETFVTTNLDQSLSSLAVPHAEKIKLLTLLKGNNSVYMNNFLNLILQNEREAYLYQMLQAVLNEIAIVSNQYDVTVTSSLPLTEEQKSRVRAVVAKKFAVTAGRLIEKVDPSLIGGFIISVNNKVIDTSIRRQLQAFKMNLK</sequence>
<feature type="chain" id="PRO_0000371159" description="ATP synthase subunit delta">
    <location>
        <begin position="1"/>
        <end position="178"/>
    </location>
</feature>
<evidence type="ECO:0000255" key="1">
    <source>
        <dbReference type="HAMAP-Rule" id="MF_01416"/>
    </source>
</evidence>
<name>ATPD_STRPC</name>
<organism>
    <name type="scientific">Streptococcus pyogenes serotype M12 (strain MGAS9429)</name>
    <dbReference type="NCBI Taxonomy" id="370551"/>
    <lineage>
        <taxon>Bacteria</taxon>
        <taxon>Bacillati</taxon>
        <taxon>Bacillota</taxon>
        <taxon>Bacilli</taxon>
        <taxon>Lactobacillales</taxon>
        <taxon>Streptococcaceae</taxon>
        <taxon>Streptococcus</taxon>
    </lineage>
</organism>
<comment type="function">
    <text evidence="1">F(1)F(0) ATP synthase produces ATP from ADP in the presence of a proton or sodium gradient. F-type ATPases consist of two structural domains, F(1) containing the extramembraneous catalytic core and F(0) containing the membrane proton channel, linked together by a central stalk and a peripheral stalk. During catalysis, ATP synthesis in the catalytic domain of F(1) is coupled via a rotary mechanism of the central stalk subunits to proton translocation.</text>
</comment>
<comment type="function">
    <text evidence="1">This protein is part of the stalk that links CF(0) to CF(1). It either transmits conformational changes from CF(0) to CF(1) or is implicated in proton conduction.</text>
</comment>
<comment type="subunit">
    <text evidence="1">F-type ATPases have 2 components, F(1) - the catalytic core - and F(0) - the membrane proton channel. F(1) has five subunits: alpha(3), beta(3), gamma(1), delta(1), epsilon(1). F(0) has three main subunits: a(1), b(2) and c(10-14). The alpha and beta chains form an alternating ring which encloses part of the gamma chain. F(1) is attached to F(0) by a central stalk formed by the gamma and epsilon chains, while a peripheral stalk is formed by the delta and b chains.</text>
</comment>
<comment type="subcellular location">
    <subcellularLocation>
        <location evidence="1">Cell membrane</location>
        <topology evidence="1">Peripheral membrane protein</topology>
    </subcellularLocation>
</comment>
<comment type="similarity">
    <text evidence="1">Belongs to the ATPase delta chain family.</text>
</comment>
<proteinExistence type="inferred from homology"/>
<protein>
    <recommendedName>
        <fullName evidence="1">ATP synthase subunit delta</fullName>
    </recommendedName>
    <alternativeName>
        <fullName evidence="1">ATP synthase F(1) sector subunit delta</fullName>
    </alternativeName>
    <alternativeName>
        <fullName evidence="1">F-type ATPase subunit delta</fullName>
        <shortName evidence="1">F-ATPase subunit delta</shortName>
    </alternativeName>
</protein>
<keyword id="KW-0066">ATP synthesis</keyword>
<keyword id="KW-1003">Cell membrane</keyword>
<keyword id="KW-0139">CF(1)</keyword>
<keyword id="KW-0375">Hydrogen ion transport</keyword>
<keyword id="KW-0406">Ion transport</keyword>
<keyword id="KW-0472">Membrane</keyword>
<keyword id="KW-0813">Transport</keyword>
<accession>Q1JMJ2</accession>
<dbReference type="EMBL" id="CP000259">
    <property type="protein sequence ID" value="ABF31820.1"/>
    <property type="molecule type" value="Genomic_DNA"/>
</dbReference>
<dbReference type="RefSeq" id="WP_002990418.1">
    <property type="nucleotide sequence ID" value="NC_008021.1"/>
</dbReference>
<dbReference type="SMR" id="Q1JMJ2"/>
<dbReference type="KEGG" id="spk:MGAS9429_Spy0632"/>
<dbReference type="HOGENOM" id="CLU_085114_1_2_9"/>
<dbReference type="Proteomes" id="UP000002433">
    <property type="component" value="Chromosome"/>
</dbReference>
<dbReference type="GO" id="GO:0005886">
    <property type="term" value="C:plasma membrane"/>
    <property type="evidence" value="ECO:0007669"/>
    <property type="project" value="UniProtKB-SubCell"/>
</dbReference>
<dbReference type="GO" id="GO:0045259">
    <property type="term" value="C:proton-transporting ATP synthase complex"/>
    <property type="evidence" value="ECO:0007669"/>
    <property type="project" value="UniProtKB-KW"/>
</dbReference>
<dbReference type="GO" id="GO:0046933">
    <property type="term" value="F:proton-transporting ATP synthase activity, rotational mechanism"/>
    <property type="evidence" value="ECO:0007669"/>
    <property type="project" value="UniProtKB-UniRule"/>
</dbReference>
<dbReference type="Gene3D" id="1.10.520.20">
    <property type="entry name" value="N-terminal domain of the delta subunit of the F1F0-ATP synthase"/>
    <property type="match status" value="1"/>
</dbReference>
<dbReference type="HAMAP" id="MF_01416">
    <property type="entry name" value="ATP_synth_delta_bact"/>
    <property type="match status" value="1"/>
</dbReference>
<dbReference type="InterPro" id="IPR026015">
    <property type="entry name" value="ATP_synth_OSCP/delta_N_sf"/>
</dbReference>
<dbReference type="InterPro" id="IPR000711">
    <property type="entry name" value="ATPase_OSCP/dsu"/>
</dbReference>
<dbReference type="NCBIfam" id="TIGR01145">
    <property type="entry name" value="ATP_synt_delta"/>
    <property type="match status" value="1"/>
</dbReference>
<dbReference type="NCBIfam" id="NF004401">
    <property type="entry name" value="PRK05758.2-1"/>
    <property type="match status" value="1"/>
</dbReference>
<dbReference type="PANTHER" id="PTHR11910">
    <property type="entry name" value="ATP SYNTHASE DELTA CHAIN"/>
    <property type="match status" value="1"/>
</dbReference>
<dbReference type="Pfam" id="PF00213">
    <property type="entry name" value="OSCP"/>
    <property type="match status" value="1"/>
</dbReference>
<dbReference type="PRINTS" id="PR00125">
    <property type="entry name" value="ATPASEDELTA"/>
</dbReference>
<dbReference type="SUPFAM" id="SSF47928">
    <property type="entry name" value="N-terminal domain of the delta subunit of the F1F0-ATP synthase"/>
    <property type="match status" value="1"/>
</dbReference>